<protein>
    <recommendedName>
        <fullName>Regulator of microtubule dynamics protein 1</fullName>
        <shortName>RMD-1</shortName>
        <shortName>hRMD-1</shortName>
    </recommendedName>
    <alternativeName>
        <fullName>Protein FAM82B</fullName>
    </alternativeName>
</protein>
<organism>
    <name type="scientific">Homo sapiens</name>
    <name type="common">Human</name>
    <dbReference type="NCBI Taxonomy" id="9606"/>
    <lineage>
        <taxon>Eukaryota</taxon>
        <taxon>Metazoa</taxon>
        <taxon>Chordata</taxon>
        <taxon>Craniata</taxon>
        <taxon>Vertebrata</taxon>
        <taxon>Euteleostomi</taxon>
        <taxon>Mammalia</taxon>
        <taxon>Eutheria</taxon>
        <taxon>Euarchontoglires</taxon>
        <taxon>Primates</taxon>
        <taxon>Haplorrhini</taxon>
        <taxon>Catarrhini</taxon>
        <taxon>Hominidae</taxon>
        <taxon>Homo</taxon>
    </lineage>
</organism>
<comment type="subunit">
    <text evidence="4">Interacts with microtubules.</text>
</comment>
<comment type="subcellular location">
    <subcellularLocation>
        <location evidence="4">Cytoplasm</location>
    </subcellularLocation>
    <subcellularLocation>
        <location evidence="4">Cytoplasm</location>
        <location evidence="4">Cytoskeleton</location>
        <location evidence="4">Spindle</location>
    </subcellularLocation>
    <subcellularLocation>
        <location evidence="4">Cytoplasm</location>
        <location evidence="4">Cytoskeleton</location>
        <location evidence="4">Spindle pole</location>
    </subcellularLocation>
    <text>In interphase localizes in the cytoplasm, and during mitosis localizes to the spindle microtubules and spindle poles.</text>
</comment>
<comment type="alternative products">
    <event type="alternative splicing"/>
    <isoform>
        <id>Q96DB5-1</id>
        <name>1</name>
        <sequence type="displayed"/>
    </isoform>
    <isoform>
        <id>Q96DB5-2</id>
        <name>2</name>
        <sequence type="described" ref="VSP_054647"/>
    </isoform>
    <isoform>
        <id>Q96DB5-3</id>
        <name>3</name>
        <sequence type="described" ref="VSP_054647 VSP_055727"/>
    </isoform>
</comment>
<comment type="similarity">
    <text evidence="6">Belongs to the RMDN family.</text>
</comment>
<sequence>MALAARLWRLLPFRRGAAPGSRLPAGTSGSRGHCGPCRFRGFEVMGNPGTFKRGLLLSALSYLGFETYQVISQAAVVHATAKVEEILEQADYLYESGETEKLYQLLTQYKESEDAELLWRLARASRDVAQLSRTSEEEKKLLVYEALEYAKRALEKNESSFASHKWYAICLSDVGDYEGIKAKIANAYIIKEHFEKAIELNPKDATSIHLMGIWCYTFAEMPWYQRRIAKMLFATPPSSTYEKALGYFHRAEQVDPNFYSKNLLLLGKTYLKLHNKKLAAFWLMKAKDYPAHTEEDKQIQTEAAQLLTSFSEKN</sequence>
<name>RMD1_HUMAN</name>
<evidence type="ECO:0000250" key="1">
    <source>
        <dbReference type="UniProtKB" id="Q9DCV4"/>
    </source>
</evidence>
<evidence type="ECO:0000269" key="2">
    <source>
    </source>
</evidence>
<evidence type="ECO:0000269" key="3">
    <source>
    </source>
</evidence>
<evidence type="ECO:0000269" key="4">
    <source>
    </source>
</evidence>
<evidence type="ECO:0000303" key="5">
    <source>
    </source>
</evidence>
<evidence type="ECO:0000305" key="6"/>
<keyword id="KW-0025">Alternative splicing</keyword>
<keyword id="KW-0963">Cytoplasm</keyword>
<keyword id="KW-0206">Cytoskeleton</keyword>
<keyword id="KW-0493">Microtubule</keyword>
<keyword id="KW-1267">Proteomics identification</keyword>
<keyword id="KW-1185">Reference proteome</keyword>
<keyword id="KW-0677">Repeat</keyword>
<keyword id="KW-0802">TPR repeat</keyword>
<accession>Q96DB5</accession>
<accession>A9UMZ8</accession>
<accession>B4DNF5</accession>
<accession>B4DZW6</accession>
<accession>B5MC61</accession>
<accession>C9JSC6</accession>
<accession>E7EVI2</accession>
<accession>Q9Y398</accession>
<proteinExistence type="evidence at protein level"/>
<dbReference type="EMBL" id="AF151848">
    <property type="protein sequence ID" value="AAD34085.1"/>
    <property type="molecule type" value="mRNA"/>
</dbReference>
<dbReference type="EMBL" id="AK297896">
    <property type="protein sequence ID" value="BAG60217.1"/>
    <property type="molecule type" value="mRNA"/>
</dbReference>
<dbReference type="EMBL" id="AK303122">
    <property type="protein sequence ID" value="BAG64228.1"/>
    <property type="molecule type" value="mRNA"/>
</dbReference>
<dbReference type="EMBL" id="AC103817">
    <property type="status" value="NOT_ANNOTATED_CDS"/>
    <property type="molecule type" value="Genomic_DNA"/>
</dbReference>
<dbReference type="EMBL" id="BC009671">
    <property type="protein sequence ID" value="AAH09671.1"/>
    <property type="molecule type" value="mRNA"/>
</dbReference>
<dbReference type="EMBL" id="BR000690">
    <property type="protein sequence ID" value="FAA00415.1"/>
    <property type="molecule type" value="mRNA"/>
</dbReference>
<dbReference type="CCDS" id="CCDS34918.1">
    <molecule id="Q96DB5-1"/>
</dbReference>
<dbReference type="CCDS" id="CCDS69509.1">
    <molecule id="Q96DB5-3"/>
</dbReference>
<dbReference type="CCDS" id="CCDS69510.1">
    <molecule id="Q96DB5-2"/>
</dbReference>
<dbReference type="RefSeq" id="NP_001273636.1">
    <molecule id="Q96DB5-3"/>
    <property type="nucleotide sequence ID" value="NM_001286707.2"/>
</dbReference>
<dbReference type="RefSeq" id="NP_001273648.1">
    <molecule id="Q96DB5-2"/>
    <property type="nucleotide sequence ID" value="NM_001286719.2"/>
</dbReference>
<dbReference type="RefSeq" id="NP_001304736.1">
    <property type="nucleotide sequence ID" value="NM_001317807.1"/>
</dbReference>
<dbReference type="RefSeq" id="NP_057117.2">
    <molecule id="Q96DB5-1"/>
    <property type="nucleotide sequence ID" value="NM_016033.3"/>
</dbReference>
<dbReference type="SMR" id="Q96DB5"/>
<dbReference type="BioGRID" id="119303">
    <property type="interactions" value="61"/>
</dbReference>
<dbReference type="FunCoup" id="Q96DB5">
    <property type="interactions" value="1443"/>
</dbReference>
<dbReference type="IntAct" id="Q96DB5">
    <property type="interactions" value="31"/>
</dbReference>
<dbReference type="MINT" id="Q96DB5"/>
<dbReference type="STRING" id="9606.ENSP00000385927"/>
<dbReference type="GlyGen" id="Q96DB5">
    <property type="glycosylation" value="1 site, 1 O-linked glycan (1 site)"/>
</dbReference>
<dbReference type="iPTMnet" id="Q96DB5"/>
<dbReference type="PhosphoSitePlus" id="Q96DB5"/>
<dbReference type="SwissPalm" id="Q96DB5"/>
<dbReference type="BioMuta" id="RMDN1"/>
<dbReference type="jPOST" id="Q96DB5"/>
<dbReference type="MassIVE" id="Q96DB5"/>
<dbReference type="PaxDb" id="9606-ENSP00000385927"/>
<dbReference type="PeptideAtlas" id="Q96DB5"/>
<dbReference type="ProteomicsDB" id="18645"/>
<dbReference type="ProteomicsDB" id="5630"/>
<dbReference type="ProteomicsDB" id="76269">
    <molecule id="Q96DB5-1"/>
</dbReference>
<dbReference type="Pumba" id="Q96DB5"/>
<dbReference type="TopDownProteomics" id="Q96DB5-1">
    <molecule id="Q96DB5-1"/>
</dbReference>
<dbReference type="Antibodypedia" id="12639">
    <property type="antibodies" value="130 antibodies from 18 providers"/>
</dbReference>
<dbReference type="DNASU" id="51115"/>
<dbReference type="Ensembl" id="ENST00000406452.8">
    <molecule id="Q96DB5-1"/>
    <property type="protein sequence ID" value="ENSP00000385927.3"/>
    <property type="gene ID" value="ENSG00000176623.12"/>
</dbReference>
<dbReference type="Ensembl" id="ENST00000430676.6">
    <molecule id="Q96DB5-2"/>
    <property type="protein sequence ID" value="ENSP00000409661.2"/>
    <property type="gene ID" value="ENSG00000176623.12"/>
</dbReference>
<dbReference type="Ensembl" id="ENST00000519966.5">
    <molecule id="Q96DB5-3"/>
    <property type="protein sequence ID" value="ENSP00000428661.1"/>
    <property type="gene ID" value="ENSG00000176623.12"/>
</dbReference>
<dbReference type="GeneID" id="51115"/>
<dbReference type="KEGG" id="hsa:51115"/>
<dbReference type="MANE-Select" id="ENST00000406452.8">
    <property type="protein sequence ID" value="ENSP00000385927.3"/>
    <property type="RefSeq nucleotide sequence ID" value="NM_016033.3"/>
    <property type="RefSeq protein sequence ID" value="NP_057117.2"/>
</dbReference>
<dbReference type="UCSC" id="uc003ydu.4">
    <molecule id="Q96DB5-1"/>
    <property type="organism name" value="human"/>
</dbReference>
<dbReference type="AGR" id="HGNC:24285"/>
<dbReference type="CTD" id="51115"/>
<dbReference type="DisGeNET" id="51115"/>
<dbReference type="GeneCards" id="RMDN1"/>
<dbReference type="HGNC" id="HGNC:24285">
    <property type="gene designation" value="RMDN1"/>
</dbReference>
<dbReference type="HPA" id="ENSG00000176623">
    <property type="expression patterns" value="Low tissue specificity"/>
</dbReference>
<dbReference type="MIM" id="611871">
    <property type="type" value="gene"/>
</dbReference>
<dbReference type="neXtProt" id="NX_Q96DB5"/>
<dbReference type="OpenTargets" id="ENSG00000176623"/>
<dbReference type="PharmGKB" id="PA142671849"/>
<dbReference type="VEuPathDB" id="HostDB:ENSG00000176623"/>
<dbReference type="eggNOG" id="ENOG502QSJV">
    <property type="taxonomic scope" value="Eukaryota"/>
</dbReference>
<dbReference type="GeneTree" id="ENSGT00950000182992"/>
<dbReference type="InParanoid" id="Q96DB5"/>
<dbReference type="OMA" id="KDVEILW"/>
<dbReference type="OrthoDB" id="69711at2759"/>
<dbReference type="PAN-GO" id="Q96DB5">
    <property type="GO annotations" value="4 GO annotations based on evolutionary models"/>
</dbReference>
<dbReference type="PhylomeDB" id="Q96DB5"/>
<dbReference type="TreeFam" id="TF315854"/>
<dbReference type="PathwayCommons" id="Q96DB5"/>
<dbReference type="SignaLink" id="Q96DB5"/>
<dbReference type="BioGRID-ORCS" id="51115">
    <property type="hits" value="6 hits in 1152 CRISPR screens"/>
</dbReference>
<dbReference type="ChiTaRS" id="RMDN1">
    <property type="organism name" value="human"/>
</dbReference>
<dbReference type="GenomeRNAi" id="51115"/>
<dbReference type="Pharos" id="Q96DB5">
    <property type="development level" value="Tdark"/>
</dbReference>
<dbReference type="PRO" id="PR:Q96DB5"/>
<dbReference type="Proteomes" id="UP000005640">
    <property type="component" value="Chromosome 8"/>
</dbReference>
<dbReference type="RNAct" id="Q96DB5">
    <property type="molecule type" value="protein"/>
</dbReference>
<dbReference type="Bgee" id="ENSG00000176623">
    <property type="expression patterns" value="Expressed in calcaneal tendon and 195 other cell types or tissues"/>
</dbReference>
<dbReference type="ExpressionAtlas" id="Q96DB5">
    <property type="expression patterns" value="baseline and differential"/>
</dbReference>
<dbReference type="GO" id="GO:0005737">
    <property type="term" value="C:cytoplasm"/>
    <property type="evidence" value="ECO:0000318"/>
    <property type="project" value="GO_Central"/>
</dbReference>
<dbReference type="GO" id="GO:0005739">
    <property type="term" value="C:mitochondrion"/>
    <property type="evidence" value="ECO:0006056"/>
    <property type="project" value="FlyBase"/>
</dbReference>
<dbReference type="GO" id="GO:0097431">
    <property type="term" value="C:mitotic spindle pole"/>
    <property type="evidence" value="ECO:0000314"/>
    <property type="project" value="UniProtKB"/>
</dbReference>
<dbReference type="GO" id="GO:0005876">
    <property type="term" value="C:spindle microtubule"/>
    <property type="evidence" value="ECO:0000314"/>
    <property type="project" value="UniProtKB"/>
</dbReference>
<dbReference type="GO" id="GO:0008017">
    <property type="term" value="F:microtubule binding"/>
    <property type="evidence" value="ECO:0000314"/>
    <property type="project" value="UniProtKB"/>
</dbReference>
<dbReference type="GO" id="GO:0051315">
    <property type="term" value="P:attachment of mitotic spindle microtubules to kinetochore"/>
    <property type="evidence" value="ECO:0000250"/>
    <property type="project" value="UniProtKB"/>
</dbReference>
<dbReference type="GO" id="GO:0007052">
    <property type="term" value="P:mitotic spindle organization"/>
    <property type="evidence" value="ECO:0000250"/>
    <property type="project" value="UniProtKB"/>
</dbReference>
<dbReference type="FunFam" id="1.25.40.10:FF:002154">
    <property type="entry name" value="regulator of microtubule dynamics protein 1"/>
    <property type="match status" value="1"/>
</dbReference>
<dbReference type="Gene3D" id="1.25.40.10">
    <property type="entry name" value="Tetratricopeptide repeat domain"/>
    <property type="match status" value="1"/>
</dbReference>
<dbReference type="InterPro" id="IPR049039">
    <property type="entry name" value="RMD1-3_a_helical_rpt"/>
</dbReference>
<dbReference type="InterPro" id="IPR011990">
    <property type="entry name" value="TPR-like_helical_dom_sf"/>
</dbReference>
<dbReference type="PANTHER" id="PTHR16056">
    <property type="entry name" value="REGULATOR OF MICROTUBULE DYNAMICS PROTEIN"/>
    <property type="match status" value="1"/>
</dbReference>
<dbReference type="PANTHER" id="PTHR16056:SF16">
    <property type="entry name" value="REGULATOR OF MICROTUBULE DYNAMICS PROTEIN 1"/>
    <property type="match status" value="1"/>
</dbReference>
<dbReference type="Pfam" id="PF21033">
    <property type="entry name" value="RMD1-3"/>
    <property type="match status" value="1"/>
</dbReference>
<dbReference type="SUPFAM" id="SSF48452">
    <property type="entry name" value="TPR-like"/>
    <property type="match status" value="1"/>
</dbReference>
<gene>
    <name type="primary">RMDN1</name>
    <name type="synonym">FAM82B</name>
    <name type="ORF">CGI-90</name>
</gene>
<feature type="chain" id="PRO_0000187181" description="Regulator of microtubule dynamics protein 1">
    <location>
        <begin position="1"/>
        <end position="314"/>
    </location>
</feature>
<feature type="repeat" description="TPR 1">
    <location>
        <begin position="168"/>
        <end position="204"/>
    </location>
</feature>
<feature type="repeat" description="TPR 2">
    <location>
        <begin position="222"/>
        <end position="258"/>
    </location>
</feature>
<feature type="modified residue" description="N6-succinyllysine" evidence="1">
    <location>
        <position position="165"/>
    </location>
</feature>
<feature type="splice variant" id="VSP_054647" description="In isoform 2 and isoform 3." evidence="5">
    <location>
        <begin position="166"/>
        <end position="195"/>
    </location>
</feature>
<feature type="splice variant" id="VSP_055727" description="In isoform 3." evidence="5">
    <location>
        <begin position="254"/>
        <end position="266"/>
    </location>
</feature>
<feature type="sequence variant" id="VAR_049028" description="In dbSNP:rs6980476." evidence="2 3">
    <original>K</original>
    <variation>N</variation>
    <location>
        <position position="52"/>
    </location>
</feature>
<feature type="sequence conflict" description="In Ref. 1; AAD34085." evidence="6" ref="1">
    <original>T</original>
    <variation>P</variation>
    <location>
        <position position="27"/>
    </location>
</feature>
<feature type="sequence conflict" description="In Ref. 1; AAD34085." evidence="6" ref="1">
    <original>HCGPC</original>
    <variation>IAAPA</variation>
    <location>
        <begin position="33"/>
        <end position="37"/>
    </location>
</feature>
<reference key="1">
    <citation type="journal article" date="2000" name="Genome Res.">
        <title>Identification of novel human genes evolutionarily conserved in Caenorhabditis elegans by comparative proteomics.</title>
        <authorList>
            <person name="Lai C.-H."/>
            <person name="Chou C.-Y."/>
            <person name="Ch'ang L.-Y."/>
            <person name="Liu C.-S."/>
            <person name="Lin W.-C."/>
        </authorList>
    </citation>
    <scope>NUCLEOTIDE SEQUENCE [LARGE SCALE MRNA] (ISOFORM 1)</scope>
    <scope>VARIANT ASN-52</scope>
</reference>
<reference key="2">
    <citation type="journal article" date="2004" name="Nat. Genet.">
        <title>Complete sequencing and characterization of 21,243 full-length human cDNAs.</title>
        <authorList>
            <person name="Ota T."/>
            <person name="Suzuki Y."/>
            <person name="Nishikawa T."/>
            <person name="Otsuki T."/>
            <person name="Sugiyama T."/>
            <person name="Irie R."/>
            <person name="Wakamatsu A."/>
            <person name="Hayashi K."/>
            <person name="Sato H."/>
            <person name="Nagai K."/>
            <person name="Kimura K."/>
            <person name="Makita H."/>
            <person name="Sekine M."/>
            <person name="Obayashi M."/>
            <person name="Nishi T."/>
            <person name="Shibahara T."/>
            <person name="Tanaka T."/>
            <person name="Ishii S."/>
            <person name="Yamamoto J."/>
            <person name="Saito K."/>
            <person name="Kawai Y."/>
            <person name="Isono Y."/>
            <person name="Nakamura Y."/>
            <person name="Nagahari K."/>
            <person name="Murakami K."/>
            <person name="Yasuda T."/>
            <person name="Iwayanagi T."/>
            <person name="Wagatsuma M."/>
            <person name="Shiratori A."/>
            <person name="Sudo H."/>
            <person name="Hosoiri T."/>
            <person name="Kaku Y."/>
            <person name="Kodaira H."/>
            <person name="Kondo H."/>
            <person name="Sugawara M."/>
            <person name="Takahashi M."/>
            <person name="Kanda K."/>
            <person name="Yokoi T."/>
            <person name="Furuya T."/>
            <person name="Kikkawa E."/>
            <person name="Omura Y."/>
            <person name="Abe K."/>
            <person name="Kamihara K."/>
            <person name="Katsuta N."/>
            <person name="Sato K."/>
            <person name="Tanikawa M."/>
            <person name="Yamazaki M."/>
            <person name="Ninomiya K."/>
            <person name="Ishibashi T."/>
            <person name="Yamashita H."/>
            <person name="Murakawa K."/>
            <person name="Fujimori K."/>
            <person name="Tanai H."/>
            <person name="Kimata M."/>
            <person name="Watanabe M."/>
            <person name="Hiraoka S."/>
            <person name="Chiba Y."/>
            <person name="Ishida S."/>
            <person name="Ono Y."/>
            <person name="Takiguchi S."/>
            <person name="Watanabe S."/>
            <person name="Yosida M."/>
            <person name="Hotuta T."/>
            <person name="Kusano J."/>
            <person name="Kanehori K."/>
            <person name="Takahashi-Fujii A."/>
            <person name="Hara H."/>
            <person name="Tanase T.-O."/>
            <person name="Nomura Y."/>
            <person name="Togiya S."/>
            <person name="Komai F."/>
            <person name="Hara R."/>
            <person name="Takeuchi K."/>
            <person name="Arita M."/>
            <person name="Imose N."/>
            <person name="Musashino K."/>
            <person name="Yuuki H."/>
            <person name="Oshima A."/>
            <person name="Sasaki N."/>
            <person name="Aotsuka S."/>
            <person name="Yoshikawa Y."/>
            <person name="Matsunawa H."/>
            <person name="Ichihara T."/>
            <person name="Shiohata N."/>
            <person name="Sano S."/>
            <person name="Moriya S."/>
            <person name="Momiyama H."/>
            <person name="Satoh N."/>
            <person name="Takami S."/>
            <person name="Terashima Y."/>
            <person name="Suzuki O."/>
            <person name="Nakagawa S."/>
            <person name="Senoh A."/>
            <person name="Mizoguchi H."/>
            <person name="Goto Y."/>
            <person name="Shimizu F."/>
            <person name="Wakebe H."/>
            <person name="Hishigaki H."/>
            <person name="Watanabe T."/>
            <person name="Sugiyama A."/>
            <person name="Takemoto M."/>
            <person name="Kawakami B."/>
            <person name="Yamazaki M."/>
            <person name="Watanabe K."/>
            <person name="Kumagai A."/>
            <person name="Itakura S."/>
            <person name="Fukuzumi Y."/>
            <person name="Fujimori Y."/>
            <person name="Komiyama M."/>
            <person name="Tashiro H."/>
            <person name="Tanigami A."/>
            <person name="Fujiwara T."/>
            <person name="Ono T."/>
            <person name="Yamada K."/>
            <person name="Fujii Y."/>
            <person name="Ozaki K."/>
            <person name="Hirao M."/>
            <person name="Ohmori Y."/>
            <person name="Kawabata A."/>
            <person name="Hikiji T."/>
            <person name="Kobatake N."/>
            <person name="Inagaki H."/>
            <person name="Ikema Y."/>
            <person name="Okamoto S."/>
            <person name="Okitani R."/>
            <person name="Kawakami T."/>
            <person name="Noguchi S."/>
            <person name="Itoh T."/>
            <person name="Shigeta K."/>
            <person name="Senba T."/>
            <person name="Matsumura K."/>
            <person name="Nakajima Y."/>
            <person name="Mizuno T."/>
            <person name="Morinaga M."/>
            <person name="Sasaki M."/>
            <person name="Togashi T."/>
            <person name="Oyama M."/>
            <person name="Hata H."/>
            <person name="Watanabe M."/>
            <person name="Komatsu T."/>
            <person name="Mizushima-Sugano J."/>
            <person name="Satoh T."/>
            <person name="Shirai Y."/>
            <person name="Takahashi Y."/>
            <person name="Nakagawa K."/>
            <person name="Okumura K."/>
            <person name="Nagase T."/>
            <person name="Nomura N."/>
            <person name="Kikuchi H."/>
            <person name="Masuho Y."/>
            <person name="Yamashita R."/>
            <person name="Nakai K."/>
            <person name="Yada T."/>
            <person name="Nakamura Y."/>
            <person name="Ohara O."/>
            <person name="Isogai T."/>
            <person name="Sugano S."/>
        </authorList>
    </citation>
    <scope>NUCLEOTIDE SEQUENCE [LARGE SCALE MRNA] (ISOFORMS 2 AND 3)</scope>
    <scope>VARIANT ASN-52</scope>
    <source>
        <tissue>Thymus</tissue>
    </source>
</reference>
<reference key="3">
    <citation type="journal article" date="2006" name="Nature">
        <title>DNA sequence and analysis of human chromosome 8.</title>
        <authorList>
            <person name="Nusbaum C."/>
            <person name="Mikkelsen T.S."/>
            <person name="Zody M.C."/>
            <person name="Asakawa S."/>
            <person name="Taudien S."/>
            <person name="Garber M."/>
            <person name="Kodira C.D."/>
            <person name="Schueler M.G."/>
            <person name="Shimizu A."/>
            <person name="Whittaker C.A."/>
            <person name="Chang J.L."/>
            <person name="Cuomo C.A."/>
            <person name="Dewar K."/>
            <person name="FitzGerald M.G."/>
            <person name="Yang X."/>
            <person name="Allen N.R."/>
            <person name="Anderson S."/>
            <person name="Asakawa T."/>
            <person name="Blechschmidt K."/>
            <person name="Bloom T."/>
            <person name="Borowsky M.L."/>
            <person name="Butler J."/>
            <person name="Cook A."/>
            <person name="Corum B."/>
            <person name="DeArellano K."/>
            <person name="DeCaprio D."/>
            <person name="Dooley K.T."/>
            <person name="Dorris L. III"/>
            <person name="Engels R."/>
            <person name="Gloeckner G."/>
            <person name="Hafez N."/>
            <person name="Hagopian D.S."/>
            <person name="Hall J.L."/>
            <person name="Ishikawa S.K."/>
            <person name="Jaffe D.B."/>
            <person name="Kamat A."/>
            <person name="Kudoh J."/>
            <person name="Lehmann R."/>
            <person name="Lokitsang T."/>
            <person name="Macdonald P."/>
            <person name="Major J.E."/>
            <person name="Matthews C.D."/>
            <person name="Mauceli E."/>
            <person name="Menzel U."/>
            <person name="Mihalev A.H."/>
            <person name="Minoshima S."/>
            <person name="Murayama Y."/>
            <person name="Naylor J.W."/>
            <person name="Nicol R."/>
            <person name="Nguyen C."/>
            <person name="O'Leary S.B."/>
            <person name="O'Neill K."/>
            <person name="Parker S.C.J."/>
            <person name="Polley A."/>
            <person name="Raymond C.K."/>
            <person name="Reichwald K."/>
            <person name="Rodriguez J."/>
            <person name="Sasaki T."/>
            <person name="Schilhabel M."/>
            <person name="Siddiqui R."/>
            <person name="Smith C.L."/>
            <person name="Sneddon T.P."/>
            <person name="Talamas J.A."/>
            <person name="Tenzin P."/>
            <person name="Topham K."/>
            <person name="Venkataraman V."/>
            <person name="Wen G."/>
            <person name="Yamazaki S."/>
            <person name="Young S.K."/>
            <person name="Zeng Q."/>
            <person name="Zimmer A.R."/>
            <person name="Rosenthal A."/>
            <person name="Birren B.W."/>
            <person name="Platzer M."/>
            <person name="Shimizu N."/>
            <person name="Lander E.S."/>
        </authorList>
    </citation>
    <scope>NUCLEOTIDE SEQUENCE [LARGE SCALE GENOMIC DNA]</scope>
</reference>
<reference key="4">
    <citation type="journal article" date="2004" name="Genome Res.">
        <title>The status, quality, and expansion of the NIH full-length cDNA project: the Mammalian Gene Collection (MGC).</title>
        <authorList>
            <consortium name="The MGC Project Team"/>
        </authorList>
    </citation>
    <scope>NUCLEOTIDE SEQUENCE [LARGE SCALE MRNA] (ISOFORM 1)</scope>
    <source>
        <tissue>Pancreas</tissue>
    </source>
</reference>
<reference key="5">
    <citation type="journal article" date="2007" name="J. Cell Biol.">
        <title>RMD-1, a novel microtubule-associated protein, functions in chromosome segregation in Caenorhabditis elegans.</title>
        <authorList>
            <person name="Oishi K."/>
            <person name="Okano H."/>
            <person name="Sawa H."/>
        </authorList>
    </citation>
    <scope>IDENTIFICATION</scope>
    <scope>INTERACTION WITH MICROTUBULES</scope>
    <scope>SUBCELLULAR LOCATION</scope>
</reference>
<reference key="6">
    <citation type="journal article" date="2011" name="BMC Syst. Biol.">
        <title>Initial characterization of the human central proteome.</title>
        <authorList>
            <person name="Burkard T.R."/>
            <person name="Planyavsky M."/>
            <person name="Kaupe I."/>
            <person name="Breitwieser F.P."/>
            <person name="Buerckstuemmer T."/>
            <person name="Bennett K.L."/>
            <person name="Superti-Furga G."/>
            <person name="Colinge J."/>
        </authorList>
    </citation>
    <scope>IDENTIFICATION BY MASS SPECTROMETRY [LARGE SCALE ANALYSIS]</scope>
</reference>
<reference key="7">
    <citation type="journal article" date="2015" name="Proteomics">
        <title>N-terminome analysis of the human mitochondrial proteome.</title>
        <authorList>
            <person name="Vaca Jacome A.S."/>
            <person name="Rabilloud T."/>
            <person name="Schaeffer-Reiss C."/>
            <person name="Rompais M."/>
            <person name="Ayoub D."/>
            <person name="Lane L."/>
            <person name="Bairoch A."/>
            <person name="Van Dorsselaer A."/>
            <person name="Carapito C."/>
        </authorList>
    </citation>
    <scope>IDENTIFICATION BY MASS SPECTROMETRY [LARGE SCALE ANALYSIS]</scope>
</reference>